<comment type="function">
    <text evidence="1">Binds together with bS18 to 16S ribosomal RNA.</text>
</comment>
<comment type="similarity">
    <text evidence="1">Belongs to the bacterial ribosomal protein bS6 family.</text>
</comment>
<gene>
    <name evidence="1" type="primary">rpsF</name>
    <name type="ordered locus">GbCGDNIH1_2214</name>
</gene>
<name>RS6_GRABC</name>
<evidence type="ECO:0000255" key="1">
    <source>
        <dbReference type="HAMAP-Rule" id="MF_00360"/>
    </source>
</evidence>
<evidence type="ECO:0000256" key="2">
    <source>
        <dbReference type="SAM" id="MobiDB-lite"/>
    </source>
</evidence>
<evidence type="ECO:0000305" key="3"/>
<accession>Q0BPZ0</accession>
<organism>
    <name type="scientific">Granulibacter bethesdensis (strain ATCC BAA-1260 / CGDNIH1)</name>
    <dbReference type="NCBI Taxonomy" id="391165"/>
    <lineage>
        <taxon>Bacteria</taxon>
        <taxon>Pseudomonadati</taxon>
        <taxon>Pseudomonadota</taxon>
        <taxon>Alphaproteobacteria</taxon>
        <taxon>Acetobacterales</taxon>
        <taxon>Acetobacteraceae</taxon>
        <taxon>Granulibacter</taxon>
    </lineage>
</organism>
<proteinExistence type="inferred from homology"/>
<keyword id="KW-1185">Reference proteome</keyword>
<keyword id="KW-0687">Ribonucleoprotein</keyword>
<keyword id="KW-0689">Ribosomal protein</keyword>
<keyword id="KW-0694">RNA-binding</keyword>
<keyword id="KW-0699">rRNA-binding</keyword>
<sequence length="154" mass="17718">MPLYESVLIARNDVTQQQVESVADHVASLIEAEGGAIKKREYWGLRTLAYRIKKNRKGHYMLLGLDAKPATITEVERQLRLNEDVLRFMTIRVEEIDDVPSVILSRKSDDRERGFRGPKPPGRFESGRKRGYDDREEFRARAGGDDDDRGLDQE</sequence>
<reference key="1">
    <citation type="journal article" date="2007" name="J. Bacteriol.">
        <title>Genome sequence analysis of the emerging human pathogenic acetic acid bacterium Granulibacter bethesdensis.</title>
        <authorList>
            <person name="Greenberg D.E."/>
            <person name="Porcella S.F."/>
            <person name="Zelazny A.M."/>
            <person name="Virtaneva K."/>
            <person name="Sturdevant D.E."/>
            <person name="Kupko J.J. III"/>
            <person name="Barbian K.D."/>
            <person name="Babar A."/>
            <person name="Dorward D.W."/>
            <person name="Holland S.M."/>
        </authorList>
    </citation>
    <scope>NUCLEOTIDE SEQUENCE [LARGE SCALE GENOMIC DNA]</scope>
    <source>
        <strain>ATCC BAA-1260 / CGDNIH1</strain>
    </source>
</reference>
<feature type="chain" id="PRO_1000005267" description="Small ribosomal subunit protein bS6">
    <location>
        <begin position="1"/>
        <end position="154"/>
    </location>
</feature>
<feature type="region of interest" description="Disordered" evidence="2">
    <location>
        <begin position="107"/>
        <end position="154"/>
    </location>
</feature>
<feature type="compositionally biased region" description="Basic and acidic residues" evidence="2">
    <location>
        <begin position="125"/>
        <end position="154"/>
    </location>
</feature>
<protein>
    <recommendedName>
        <fullName evidence="1">Small ribosomal subunit protein bS6</fullName>
    </recommendedName>
    <alternativeName>
        <fullName evidence="3">30S ribosomal protein S6</fullName>
    </alternativeName>
</protein>
<dbReference type="EMBL" id="CP000394">
    <property type="protein sequence ID" value="ABI63112.1"/>
    <property type="molecule type" value="Genomic_DNA"/>
</dbReference>
<dbReference type="RefSeq" id="WP_011632914.1">
    <property type="nucleotide sequence ID" value="NC_008343.2"/>
</dbReference>
<dbReference type="SMR" id="Q0BPZ0"/>
<dbReference type="STRING" id="391165.GbCGDNIH1_2214"/>
<dbReference type="GeneID" id="69746393"/>
<dbReference type="KEGG" id="gbe:GbCGDNIH1_2214"/>
<dbReference type="eggNOG" id="COG0360">
    <property type="taxonomic scope" value="Bacteria"/>
</dbReference>
<dbReference type="HOGENOM" id="CLU_113441_2_0_5"/>
<dbReference type="OrthoDB" id="9812702at2"/>
<dbReference type="Proteomes" id="UP000001963">
    <property type="component" value="Chromosome"/>
</dbReference>
<dbReference type="GO" id="GO:0022627">
    <property type="term" value="C:cytosolic small ribosomal subunit"/>
    <property type="evidence" value="ECO:0007669"/>
    <property type="project" value="TreeGrafter"/>
</dbReference>
<dbReference type="GO" id="GO:0070181">
    <property type="term" value="F:small ribosomal subunit rRNA binding"/>
    <property type="evidence" value="ECO:0007669"/>
    <property type="project" value="TreeGrafter"/>
</dbReference>
<dbReference type="GO" id="GO:0003735">
    <property type="term" value="F:structural constituent of ribosome"/>
    <property type="evidence" value="ECO:0007669"/>
    <property type="project" value="InterPro"/>
</dbReference>
<dbReference type="GO" id="GO:0006412">
    <property type="term" value="P:translation"/>
    <property type="evidence" value="ECO:0007669"/>
    <property type="project" value="UniProtKB-UniRule"/>
</dbReference>
<dbReference type="CDD" id="cd00473">
    <property type="entry name" value="bS6"/>
    <property type="match status" value="1"/>
</dbReference>
<dbReference type="Gene3D" id="3.30.70.60">
    <property type="match status" value="1"/>
</dbReference>
<dbReference type="HAMAP" id="MF_00360">
    <property type="entry name" value="Ribosomal_bS6"/>
    <property type="match status" value="1"/>
</dbReference>
<dbReference type="InterPro" id="IPR000529">
    <property type="entry name" value="Ribosomal_bS6"/>
</dbReference>
<dbReference type="InterPro" id="IPR035980">
    <property type="entry name" value="Ribosomal_bS6_sf"/>
</dbReference>
<dbReference type="InterPro" id="IPR020814">
    <property type="entry name" value="Ribosomal_S6_plastid/chlpt"/>
</dbReference>
<dbReference type="InterPro" id="IPR014717">
    <property type="entry name" value="Transl_elong_EF1B/ribsomal_bS6"/>
</dbReference>
<dbReference type="NCBIfam" id="TIGR00166">
    <property type="entry name" value="S6"/>
    <property type="match status" value="1"/>
</dbReference>
<dbReference type="PANTHER" id="PTHR21011">
    <property type="entry name" value="MITOCHONDRIAL 28S RIBOSOMAL PROTEIN S6"/>
    <property type="match status" value="1"/>
</dbReference>
<dbReference type="PANTHER" id="PTHR21011:SF1">
    <property type="entry name" value="SMALL RIBOSOMAL SUBUNIT PROTEIN BS6M"/>
    <property type="match status" value="1"/>
</dbReference>
<dbReference type="Pfam" id="PF01250">
    <property type="entry name" value="Ribosomal_S6"/>
    <property type="match status" value="1"/>
</dbReference>
<dbReference type="SUPFAM" id="SSF54995">
    <property type="entry name" value="Ribosomal protein S6"/>
    <property type="match status" value="1"/>
</dbReference>